<sequence>MGDWNLLGDTLEEVHIHSTMIGKIWLTILFIFRMLVLGVAAEDVWNDEQSGFICNTEQPGCRNVCYDQAFPISLIRYWVLQVIFVSSPSLVYMGHALYRLRVLEEERQRMKAQLRVELEEVEFEMPRDRRRLEQELCQLEKRKLNKAPLRGTLLCTYVIHIFTRSVVEVGFMIGQYLLYGFHLEPLFKCHGHPCPNIIDCFVSRPTEKTIFLLFMQSIATISLFLNILEIFHLGFKKIKRGLWGKYKLKKEHNEFHANKAKQNVAKYQSTSANSLKRLPSAPDYNLLVEKQTHTAVYPSLNSSSVFQPNPDNHSVNDEKCILDEQETVLSNEISTLSTSCSHFQHISSNNNKDTHKIFGKELNGNQLMEKRETEGKDSKRNYYSRGHRSIPGVAIDGENNMRQSPQTVFSLPANCDWKPRWLRATWGSSTEHENRGSPPKGNLKGQFRKGTVRTLPPSQGDSQSLDIPNTADSLGGLSFEPGLVRTCNNPVCPPNHVVSLTNNLIGRRVPTDLQI</sequence>
<protein>
    <recommendedName>
        <fullName>Gap junction alpha-9 protein</fullName>
    </recommendedName>
    <alternativeName>
        <fullName>Connexin-58</fullName>
        <shortName>Cx58</shortName>
    </alternativeName>
    <alternativeName>
        <fullName>Connexin-59</fullName>
        <shortName>Cx59</shortName>
    </alternativeName>
    <alternativeName>
        <fullName>Gap junction alpha-10 protein</fullName>
    </alternativeName>
</protein>
<comment type="function">
    <text evidence="1">One gap junction consists of a cluster of closely packed pairs of transmembrane channels, the connexons, through which materials of low MW diffuse from one cell to a neighboring cell.</text>
</comment>
<comment type="subunit">
    <text evidence="1">A connexon is composed of a hexamer of connexins.</text>
</comment>
<comment type="subcellular location">
    <subcellularLocation>
        <location evidence="1">Cell membrane</location>
        <topology evidence="1">Multi-pass membrane protein</topology>
    </subcellularLocation>
    <subcellularLocation>
        <location evidence="1">Cell junction</location>
        <location evidence="1">Gap junction</location>
    </subcellularLocation>
</comment>
<comment type="alternative products">
    <event type="alternative splicing"/>
    <isoform>
        <id>P57773-1</id>
        <name>1</name>
        <sequence type="displayed"/>
    </isoform>
    <isoform>
        <id>P57773-2</id>
        <name>2</name>
        <sequence type="described" ref="VSP_035808"/>
    </isoform>
</comment>
<comment type="tissue specificity">
    <text evidence="4">Highly abundant in skeletal muscle. Also detected in testis.</text>
</comment>
<comment type="similarity">
    <text evidence="7">Belongs to the connexin family. Alpha-type (group II) subfamily.</text>
</comment>
<gene>
    <name type="primary">GJA9</name>
    <name type="synonym">GJA10</name>
</gene>
<dbReference type="EMBL" id="AF179597">
    <property type="protein sequence ID" value="AAG09406.1"/>
    <property type="molecule type" value="Genomic_DNA"/>
</dbReference>
<dbReference type="EMBL" id="AF271261">
    <property type="protein sequence ID" value="AAK55516.1"/>
    <property type="molecule type" value="mRNA"/>
</dbReference>
<dbReference type="EMBL" id="AK123051">
    <property type="protein sequence ID" value="BAG53864.1"/>
    <property type="molecule type" value="mRNA"/>
</dbReference>
<dbReference type="EMBL" id="AK312811">
    <property type="protein sequence ID" value="BAG35669.1"/>
    <property type="molecule type" value="mRNA"/>
</dbReference>
<dbReference type="EMBL" id="AL139260">
    <property type="status" value="NOT_ANNOTATED_CDS"/>
    <property type="molecule type" value="Genomic_DNA"/>
</dbReference>
<dbReference type="EMBL" id="CH471059">
    <property type="protein sequence ID" value="EAX07289.1"/>
    <property type="molecule type" value="Genomic_DNA"/>
</dbReference>
<dbReference type="CCDS" id="CCDS432.1">
    <molecule id="P57773-1"/>
</dbReference>
<dbReference type="RefSeq" id="NP_110399.2">
    <molecule id="P57773-1"/>
    <property type="nucleotide sequence ID" value="NM_030772.4"/>
</dbReference>
<dbReference type="SMR" id="P57773"/>
<dbReference type="BioGRID" id="123346">
    <property type="interactions" value="2"/>
</dbReference>
<dbReference type="FunCoup" id="P57773">
    <property type="interactions" value="2"/>
</dbReference>
<dbReference type="STRING" id="9606.ENSP00000350415"/>
<dbReference type="BioMuta" id="GJA9"/>
<dbReference type="DMDM" id="50403749"/>
<dbReference type="MassIVE" id="P57773"/>
<dbReference type="PaxDb" id="9606-ENSP00000354020"/>
<dbReference type="PeptideAtlas" id="P57773"/>
<dbReference type="ProteomicsDB" id="57035">
    <molecule id="P57773-1"/>
</dbReference>
<dbReference type="Antibodypedia" id="31839">
    <property type="antibodies" value="146 antibodies from 21 providers"/>
</dbReference>
<dbReference type="DNASU" id="81025"/>
<dbReference type="Ensembl" id="ENST00000357771.5">
    <molecule id="P57773-1"/>
    <property type="protein sequence ID" value="ENSP00000350415.3"/>
    <property type="gene ID" value="ENSG00000131233.10"/>
</dbReference>
<dbReference type="Ensembl" id="ENST00000360786.3">
    <molecule id="P57773-1"/>
    <property type="protein sequence ID" value="ENSP00000354020.3"/>
    <property type="gene ID" value="ENSG00000131233.10"/>
</dbReference>
<dbReference type="GeneID" id="81025"/>
<dbReference type="KEGG" id="hsa:81025"/>
<dbReference type="MANE-Select" id="ENST00000357771.5">
    <property type="protein sequence ID" value="ENSP00000350415.3"/>
    <property type="RefSeq nucleotide sequence ID" value="NM_030772.5"/>
    <property type="RefSeq protein sequence ID" value="NP_110399.2"/>
</dbReference>
<dbReference type="UCSC" id="uc057ezo.1">
    <molecule id="P57773-1"/>
    <property type="organism name" value="human"/>
</dbReference>
<dbReference type="AGR" id="HGNC:19155"/>
<dbReference type="CTD" id="81025"/>
<dbReference type="DisGeNET" id="81025"/>
<dbReference type="GeneCards" id="GJA9"/>
<dbReference type="HGNC" id="HGNC:19155">
    <property type="gene designation" value="GJA9"/>
</dbReference>
<dbReference type="HPA" id="ENSG00000131233">
    <property type="expression patterns" value="Not detected"/>
</dbReference>
<dbReference type="MIM" id="611923">
    <property type="type" value="gene"/>
</dbReference>
<dbReference type="neXtProt" id="NX_P57773"/>
<dbReference type="PharmGKB" id="PA164741587"/>
<dbReference type="VEuPathDB" id="HostDB:ENSG00000131233"/>
<dbReference type="eggNOG" id="ENOG502QQPH">
    <property type="taxonomic scope" value="Eukaryota"/>
</dbReference>
<dbReference type="GeneTree" id="ENSGT01090000260070"/>
<dbReference type="HOGENOM" id="CLU_037388_1_1_1"/>
<dbReference type="InParanoid" id="P57773"/>
<dbReference type="OMA" id="LWGQYKL"/>
<dbReference type="OrthoDB" id="9939271at2759"/>
<dbReference type="PAN-GO" id="P57773">
    <property type="GO annotations" value="3 GO annotations based on evolutionary models"/>
</dbReference>
<dbReference type="PhylomeDB" id="P57773"/>
<dbReference type="TreeFam" id="TF329606"/>
<dbReference type="PathwayCommons" id="P57773"/>
<dbReference type="Reactome" id="R-HSA-190861">
    <property type="pathway name" value="Gap junction assembly"/>
</dbReference>
<dbReference type="BioGRID-ORCS" id="81025">
    <property type="hits" value="10 hits in 1144 CRISPR screens"/>
</dbReference>
<dbReference type="GenomeRNAi" id="81025"/>
<dbReference type="Pharos" id="P57773">
    <property type="development level" value="Tbio"/>
</dbReference>
<dbReference type="PRO" id="PR:P57773"/>
<dbReference type="Proteomes" id="UP000005640">
    <property type="component" value="Chromosome 1"/>
</dbReference>
<dbReference type="RNAct" id="P57773">
    <property type="molecule type" value="protein"/>
</dbReference>
<dbReference type="Bgee" id="ENSG00000131233">
    <property type="expression patterns" value="Expressed in male germ line stem cell (sensu Vertebrata) in testis and 45 other cell types or tissues"/>
</dbReference>
<dbReference type="ExpressionAtlas" id="P57773">
    <property type="expression patterns" value="baseline and differential"/>
</dbReference>
<dbReference type="GO" id="GO:0005922">
    <property type="term" value="C:connexin complex"/>
    <property type="evidence" value="ECO:0000318"/>
    <property type="project" value="GO_Central"/>
</dbReference>
<dbReference type="GO" id="GO:0005243">
    <property type="term" value="F:gap junction channel activity"/>
    <property type="evidence" value="ECO:0000318"/>
    <property type="project" value="GO_Central"/>
</dbReference>
<dbReference type="GO" id="GO:0007267">
    <property type="term" value="P:cell-cell signaling"/>
    <property type="evidence" value="ECO:0000318"/>
    <property type="project" value="GO_Central"/>
</dbReference>
<dbReference type="FunFam" id="1.20.1440.80:FF:000001">
    <property type="entry name" value="Gap junction alpha-1"/>
    <property type="match status" value="1"/>
</dbReference>
<dbReference type="Gene3D" id="1.20.1440.80">
    <property type="entry name" value="Gap junction channel protein cysteine-rich domain"/>
    <property type="match status" value="1"/>
</dbReference>
<dbReference type="InterPro" id="IPR000500">
    <property type="entry name" value="Connexin"/>
</dbReference>
<dbReference type="InterPro" id="IPR019570">
    <property type="entry name" value="Connexin_CCC"/>
</dbReference>
<dbReference type="InterPro" id="IPR017990">
    <property type="entry name" value="Connexin_CS"/>
</dbReference>
<dbReference type="InterPro" id="IPR013092">
    <property type="entry name" value="Connexin_N"/>
</dbReference>
<dbReference type="InterPro" id="IPR038359">
    <property type="entry name" value="Connexin_N_sf"/>
</dbReference>
<dbReference type="PANTHER" id="PTHR11984">
    <property type="entry name" value="CONNEXIN"/>
    <property type="match status" value="1"/>
</dbReference>
<dbReference type="PANTHER" id="PTHR11984:SF60">
    <property type="entry name" value="GAP JUNCTION ALPHA-9 PROTEIN"/>
    <property type="match status" value="1"/>
</dbReference>
<dbReference type="Pfam" id="PF00029">
    <property type="entry name" value="Connexin"/>
    <property type="match status" value="1"/>
</dbReference>
<dbReference type="PRINTS" id="PR00206">
    <property type="entry name" value="CONNEXIN"/>
</dbReference>
<dbReference type="SMART" id="SM00037">
    <property type="entry name" value="CNX"/>
    <property type="match status" value="1"/>
</dbReference>
<dbReference type="SMART" id="SM01089">
    <property type="entry name" value="Connexin_CCC"/>
    <property type="match status" value="1"/>
</dbReference>
<dbReference type="PROSITE" id="PS00407">
    <property type="entry name" value="CONNEXINS_1"/>
    <property type="match status" value="1"/>
</dbReference>
<dbReference type="PROSITE" id="PS00408">
    <property type="entry name" value="CONNEXINS_2"/>
    <property type="match status" value="1"/>
</dbReference>
<reference key="1">
    <citation type="submission" date="1999-08" db="EMBL/GenBank/DDBJ databases">
        <title>Identification of a new connexin gene using degenerate PCR primers.</title>
        <authorList>
            <person name="Coucke P.J."/>
            <person name="Van Laer L."/>
            <person name="Meyers J."/>
            <person name="Van Hauwe P."/>
            <person name="Ottschytsch N."/>
            <person name="Wauters G."/>
            <person name="Kelley P."/>
            <person name="Willems P.J."/>
            <person name="Van Camp G."/>
        </authorList>
    </citation>
    <scope>NUCLEOTIDE SEQUENCE [GENOMIC DNA]</scope>
    <scope>VARIANT ILE-497</scope>
</reference>
<reference key="2">
    <citation type="submission" date="2000-05" db="EMBL/GenBank/DDBJ databases">
        <title>Molecular cloning of human CX58.</title>
        <authorList>
            <person name="Xia J.H."/>
            <person name="Lu C.Y."/>
            <person name="He Y.G."/>
            <person name="Zhang H.L."/>
            <person name="Deng H."/>
        </authorList>
    </citation>
    <scope>NUCLEOTIDE SEQUENCE [MRNA] (ISOFORM 1)</scope>
    <source>
        <tissue>Placenta</tissue>
    </source>
</reference>
<reference key="3">
    <citation type="journal article" date="2004" name="Nat. Genet.">
        <title>Complete sequencing and characterization of 21,243 full-length human cDNAs.</title>
        <authorList>
            <person name="Ota T."/>
            <person name="Suzuki Y."/>
            <person name="Nishikawa T."/>
            <person name="Otsuki T."/>
            <person name="Sugiyama T."/>
            <person name="Irie R."/>
            <person name="Wakamatsu A."/>
            <person name="Hayashi K."/>
            <person name="Sato H."/>
            <person name="Nagai K."/>
            <person name="Kimura K."/>
            <person name="Makita H."/>
            <person name="Sekine M."/>
            <person name="Obayashi M."/>
            <person name="Nishi T."/>
            <person name="Shibahara T."/>
            <person name="Tanaka T."/>
            <person name="Ishii S."/>
            <person name="Yamamoto J."/>
            <person name="Saito K."/>
            <person name="Kawai Y."/>
            <person name="Isono Y."/>
            <person name="Nakamura Y."/>
            <person name="Nagahari K."/>
            <person name="Murakami K."/>
            <person name="Yasuda T."/>
            <person name="Iwayanagi T."/>
            <person name="Wagatsuma M."/>
            <person name="Shiratori A."/>
            <person name="Sudo H."/>
            <person name="Hosoiri T."/>
            <person name="Kaku Y."/>
            <person name="Kodaira H."/>
            <person name="Kondo H."/>
            <person name="Sugawara M."/>
            <person name="Takahashi M."/>
            <person name="Kanda K."/>
            <person name="Yokoi T."/>
            <person name="Furuya T."/>
            <person name="Kikkawa E."/>
            <person name="Omura Y."/>
            <person name="Abe K."/>
            <person name="Kamihara K."/>
            <person name="Katsuta N."/>
            <person name="Sato K."/>
            <person name="Tanikawa M."/>
            <person name="Yamazaki M."/>
            <person name="Ninomiya K."/>
            <person name="Ishibashi T."/>
            <person name="Yamashita H."/>
            <person name="Murakawa K."/>
            <person name="Fujimori K."/>
            <person name="Tanai H."/>
            <person name="Kimata M."/>
            <person name="Watanabe M."/>
            <person name="Hiraoka S."/>
            <person name="Chiba Y."/>
            <person name="Ishida S."/>
            <person name="Ono Y."/>
            <person name="Takiguchi S."/>
            <person name="Watanabe S."/>
            <person name="Yosida M."/>
            <person name="Hotuta T."/>
            <person name="Kusano J."/>
            <person name="Kanehori K."/>
            <person name="Takahashi-Fujii A."/>
            <person name="Hara H."/>
            <person name="Tanase T.-O."/>
            <person name="Nomura Y."/>
            <person name="Togiya S."/>
            <person name="Komai F."/>
            <person name="Hara R."/>
            <person name="Takeuchi K."/>
            <person name="Arita M."/>
            <person name="Imose N."/>
            <person name="Musashino K."/>
            <person name="Yuuki H."/>
            <person name="Oshima A."/>
            <person name="Sasaki N."/>
            <person name="Aotsuka S."/>
            <person name="Yoshikawa Y."/>
            <person name="Matsunawa H."/>
            <person name="Ichihara T."/>
            <person name="Shiohata N."/>
            <person name="Sano S."/>
            <person name="Moriya S."/>
            <person name="Momiyama H."/>
            <person name="Satoh N."/>
            <person name="Takami S."/>
            <person name="Terashima Y."/>
            <person name="Suzuki O."/>
            <person name="Nakagawa S."/>
            <person name="Senoh A."/>
            <person name="Mizoguchi H."/>
            <person name="Goto Y."/>
            <person name="Shimizu F."/>
            <person name="Wakebe H."/>
            <person name="Hishigaki H."/>
            <person name="Watanabe T."/>
            <person name="Sugiyama A."/>
            <person name="Takemoto M."/>
            <person name="Kawakami B."/>
            <person name="Yamazaki M."/>
            <person name="Watanabe K."/>
            <person name="Kumagai A."/>
            <person name="Itakura S."/>
            <person name="Fukuzumi Y."/>
            <person name="Fujimori Y."/>
            <person name="Komiyama M."/>
            <person name="Tashiro H."/>
            <person name="Tanigami A."/>
            <person name="Fujiwara T."/>
            <person name="Ono T."/>
            <person name="Yamada K."/>
            <person name="Fujii Y."/>
            <person name="Ozaki K."/>
            <person name="Hirao M."/>
            <person name="Ohmori Y."/>
            <person name="Kawabata A."/>
            <person name="Hikiji T."/>
            <person name="Kobatake N."/>
            <person name="Inagaki H."/>
            <person name="Ikema Y."/>
            <person name="Okamoto S."/>
            <person name="Okitani R."/>
            <person name="Kawakami T."/>
            <person name="Noguchi S."/>
            <person name="Itoh T."/>
            <person name="Shigeta K."/>
            <person name="Senba T."/>
            <person name="Matsumura K."/>
            <person name="Nakajima Y."/>
            <person name="Mizuno T."/>
            <person name="Morinaga M."/>
            <person name="Sasaki M."/>
            <person name="Togashi T."/>
            <person name="Oyama M."/>
            <person name="Hata H."/>
            <person name="Watanabe M."/>
            <person name="Komatsu T."/>
            <person name="Mizushima-Sugano J."/>
            <person name="Satoh T."/>
            <person name="Shirai Y."/>
            <person name="Takahashi Y."/>
            <person name="Nakagawa K."/>
            <person name="Okumura K."/>
            <person name="Nagase T."/>
            <person name="Nomura N."/>
            <person name="Kikuchi H."/>
            <person name="Masuho Y."/>
            <person name="Yamashita R."/>
            <person name="Nakai K."/>
            <person name="Yada T."/>
            <person name="Nakamura Y."/>
            <person name="Ohara O."/>
            <person name="Isogai T."/>
            <person name="Sugano S."/>
        </authorList>
    </citation>
    <scope>NUCLEOTIDE SEQUENCE [LARGE SCALE MRNA] (ISOFORMS 1 AND 2)</scope>
    <source>
        <tissue>Testis</tissue>
    </source>
</reference>
<reference key="4">
    <citation type="journal article" date="2006" name="Nature">
        <title>The DNA sequence and biological annotation of human chromosome 1.</title>
        <authorList>
            <person name="Gregory S.G."/>
            <person name="Barlow K.F."/>
            <person name="McLay K.E."/>
            <person name="Kaul R."/>
            <person name="Swarbreck D."/>
            <person name="Dunham A."/>
            <person name="Scott C.E."/>
            <person name="Howe K.L."/>
            <person name="Woodfine K."/>
            <person name="Spencer C.C.A."/>
            <person name="Jones M.C."/>
            <person name="Gillson C."/>
            <person name="Searle S."/>
            <person name="Zhou Y."/>
            <person name="Kokocinski F."/>
            <person name="McDonald L."/>
            <person name="Evans R."/>
            <person name="Phillips K."/>
            <person name="Atkinson A."/>
            <person name="Cooper R."/>
            <person name="Jones C."/>
            <person name="Hall R.E."/>
            <person name="Andrews T.D."/>
            <person name="Lloyd C."/>
            <person name="Ainscough R."/>
            <person name="Almeida J.P."/>
            <person name="Ambrose K.D."/>
            <person name="Anderson F."/>
            <person name="Andrew R.W."/>
            <person name="Ashwell R.I.S."/>
            <person name="Aubin K."/>
            <person name="Babbage A.K."/>
            <person name="Bagguley C.L."/>
            <person name="Bailey J."/>
            <person name="Beasley H."/>
            <person name="Bethel G."/>
            <person name="Bird C.P."/>
            <person name="Bray-Allen S."/>
            <person name="Brown J.Y."/>
            <person name="Brown A.J."/>
            <person name="Buckley D."/>
            <person name="Burton J."/>
            <person name="Bye J."/>
            <person name="Carder C."/>
            <person name="Chapman J.C."/>
            <person name="Clark S.Y."/>
            <person name="Clarke G."/>
            <person name="Clee C."/>
            <person name="Cobley V."/>
            <person name="Collier R.E."/>
            <person name="Corby N."/>
            <person name="Coville G.J."/>
            <person name="Davies J."/>
            <person name="Deadman R."/>
            <person name="Dunn M."/>
            <person name="Earthrowl M."/>
            <person name="Ellington A.G."/>
            <person name="Errington H."/>
            <person name="Frankish A."/>
            <person name="Frankland J."/>
            <person name="French L."/>
            <person name="Garner P."/>
            <person name="Garnett J."/>
            <person name="Gay L."/>
            <person name="Ghori M.R.J."/>
            <person name="Gibson R."/>
            <person name="Gilby L.M."/>
            <person name="Gillett W."/>
            <person name="Glithero R.J."/>
            <person name="Grafham D.V."/>
            <person name="Griffiths C."/>
            <person name="Griffiths-Jones S."/>
            <person name="Grocock R."/>
            <person name="Hammond S."/>
            <person name="Harrison E.S.I."/>
            <person name="Hart E."/>
            <person name="Haugen E."/>
            <person name="Heath P.D."/>
            <person name="Holmes S."/>
            <person name="Holt K."/>
            <person name="Howden P.J."/>
            <person name="Hunt A.R."/>
            <person name="Hunt S.E."/>
            <person name="Hunter G."/>
            <person name="Isherwood J."/>
            <person name="James R."/>
            <person name="Johnson C."/>
            <person name="Johnson D."/>
            <person name="Joy A."/>
            <person name="Kay M."/>
            <person name="Kershaw J.K."/>
            <person name="Kibukawa M."/>
            <person name="Kimberley A.M."/>
            <person name="King A."/>
            <person name="Knights A.J."/>
            <person name="Lad H."/>
            <person name="Laird G."/>
            <person name="Lawlor S."/>
            <person name="Leongamornlert D.A."/>
            <person name="Lloyd D.M."/>
            <person name="Loveland J."/>
            <person name="Lovell J."/>
            <person name="Lush M.J."/>
            <person name="Lyne R."/>
            <person name="Martin S."/>
            <person name="Mashreghi-Mohammadi M."/>
            <person name="Matthews L."/>
            <person name="Matthews N.S.W."/>
            <person name="McLaren S."/>
            <person name="Milne S."/>
            <person name="Mistry S."/>
            <person name="Moore M.J.F."/>
            <person name="Nickerson T."/>
            <person name="O'Dell C.N."/>
            <person name="Oliver K."/>
            <person name="Palmeiri A."/>
            <person name="Palmer S.A."/>
            <person name="Parker A."/>
            <person name="Patel D."/>
            <person name="Pearce A.V."/>
            <person name="Peck A.I."/>
            <person name="Pelan S."/>
            <person name="Phelps K."/>
            <person name="Phillimore B.J."/>
            <person name="Plumb R."/>
            <person name="Rajan J."/>
            <person name="Raymond C."/>
            <person name="Rouse G."/>
            <person name="Saenphimmachak C."/>
            <person name="Sehra H.K."/>
            <person name="Sheridan E."/>
            <person name="Shownkeen R."/>
            <person name="Sims S."/>
            <person name="Skuce C.D."/>
            <person name="Smith M."/>
            <person name="Steward C."/>
            <person name="Subramanian S."/>
            <person name="Sycamore N."/>
            <person name="Tracey A."/>
            <person name="Tromans A."/>
            <person name="Van Helmond Z."/>
            <person name="Wall M."/>
            <person name="Wallis J.M."/>
            <person name="White S."/>
            <person name="Whitehead S.L."/>
            <person name="Wilkinson J.E."/>
            <person name="Willey D.L."/>
            <person name="Williams H."/>
            <person name="Wilming L."/>
            <person name="Wray P.W."/>
            <person name="Wu Z."/>
            <person name="Coulson A."/>
            <person name="Vaudin M."/>
            <person name="Sulston J.E."/>
            <person name="Durbin R.M."/>
            <person name="Hubbard T."/>
            <person name="Wooster R."/>
            <person name="Dunham I."/>
            <person name="Carter N.P."/>
            <person name="McVean G."/>
            <person name="Ross M.T."/>
            <person name="Harrow J."/>
            <person name="Olson M.V."/>
            <person name="Beck S."/>
            <person name="Rogers J."/>
            <person name="Bentley D.R."/>
        </authorList>
    </citation>
    <scope>NUCLEOTIDE SEQUENCE [LARGE SCALE GENOMIC DNA]</scope>
</reference>
<reference key="5">
    <citation type="submission" date="2005-09" db="EMBL/GenBank/DDBJ databases">
        <authorList>
            <person name="Mural R.J."/>
            <person name="Istrail S."/>
            <person name="Sutton G.G."/>
            <person name="Florea L."/>
            <person name="Halpern A.L."/>
            <person name="Mobarry C.M."/>
            <person name="Lippert R."/>
            <person name="Walenz B."/>
            <person name="Shatkay H."/>
            <person name="Dew I."/>
            <person name="Miller J.R."/>
            <person name="Flanigan M.J."/>
            <person name="Edwards N.J."/>
            <person name="Bolanos R."/>
            <person name="Fasulo D."/>
            <person name="Halldorsson B.V."/>
            <person name="Hannenhalli S."/>
            <person name="Turner R."/>
            <person name="Yooseph S."/>
            <person name="Lu F."/>
            <person name="Nusskern D.R."/>
            <person name="Shue B.C."/>
            <person name="Zheng X.H."/>
            <person name="Zhong F."/>
            <person name="Delcher A.L."/>
            <person name="Huson D.H."/>
            <person name="Kravitz S.A."/>
            <person name="Mouchard L."/>
            <person name="Reinert K."/>
            <person name="Remington K.A."/>
            <person name="Clark A.G."/>
            <person name="Waterman M.S."/>
            <person name="Eichler E.E."/>
            <person name="Adams M.D."/>
            <person name="Hunkapiller M.W."/>
            <person name="Myers E.W."/>
            <person name="Venter J.C."/>
        </authorList>
    </citation>
    <scope>NUCLEOTIDE SEQUENCE [LARGE SCALE GENOMIC DNA]</scope>
</reference>
<reference key="6">
    <citation type="journal article" date="2003" name="Cell Commun. Adhes.">
        <title>Expression profiles of the novel human connexin genes hCx30.2, hCx40.1, and hCx62 differ from their putative mouse orthologues.</title>
        <authorList>
            <person name="Soehl G."/>
            <person name="Nielsen P.A."/>
            <person name="Eiberger J."/>
            <person name="Willecke K."/>
        </authorList>
    </citation>
    <scope>TISSUE SPECIFICITY</scope>
</reference>
<feature type="chain" id="PRO_0000057840" description="Gap junction alpha-9 protein">
    <location>
        <begin position="1"/>
        <end position="515"/>
    </location>
</feature>
<feature type="topological domain" description="Cytoplasmic" evidence="2">
    <location>
        <begin position="1"/>
        <end position="19"/>
    </location>
</feature>
<feature type="transmembrane region" description="Helical" evidence="2">
    <location>
        <begin position="20"/>
        <end position="40"/>
    </location>
</feature>
<feature type="topological domain" description="Extracellular" evidence="2">
    <location>
        <begin position="41"/>
        <end position="77"/>
    </location>
</feature>
<feature type="transmembrane region" description="Helical" evidence="2">
    <location>
        <begin position="78"/>
        <end position="98"/>
    </location>
</feature>
<feature type="topological domain" description="Cytoplasmic" evidence="2">
    <location>
        <begin position="99"/>
        <end position="166"/>
    </location>
</feature>
<feature type="transmembrane region" description="Helical" evidence="2">
    <location>
        <begin position="167"/>
        <end position="187"/>
    </location>
</feature>
<feature type="topological domain" description="Extracellular" evidence="2">
    <location>
        <begin position="188"/>
        <end position="209"/>
    </location>
</feature>
<feature type="transmembrane region" description="Helical" evidence="2">
    <location>
        <begin position="210"/>
        <end position="230"/>
    </location>
</feature>
<feature type="topological domain" description="Cytoplasmic" evidence="2">
    <location>
        <begin position="231"/>
        <end position="515"/>
    </location>
</feature>
<feature type="region of interest" description="Disordered" evidence="3">
    <location>
        <begin position="370"/>
        <end position="400"/>
    </location>
</feature>
<feature type="region of interest" description="Disordered" evidence="3">
    <location>
        <begin position="428"/>
        <end position="472"/>
    </location>
</feature>
<feature type="compositionally biased region" description="Basic and acidic residues" evidence="3">
    <location>
        <begin position="370"/>
        <end position="380"/>
    </location>
</feature>
<feature type="compositionally biased region" description="Polar residues" evidence="3">
    <location>
        <begin position="456"/>
        <end position="472"/>
    </location>
</feature>
<feature type="splice variant" id="VSP_035808" description="In isoform 2." evidence="6">
    <original>GNLKGQFRKGTVRTLPPSQGDSQSLDIPNTADSLGGLSFEPGLVRTCNNPVCPPNHVVSLTNNLIGRRVPTDLQI</original>
    <variation>VPGSKATASSLLLILQRPTSSQPRLKETPKIKAEAKIYDSKHPPQLLQSTVSTFSGREPRSPAPMGHHSFRGPR</variation>
    <location>
        <begin position="441"/>
        <end position="515"/>
    </location>
</feature>
<feature type="sequence variant" id="VAR_019392" description="In dbSNP:rs880303." evidence="5">
    <original>V</original>
    <variation>I</variation>
    <location>
        <position position="497"/>
    </location>
</feature>
<keyword id="KW-0025">Alternative splicing</keyword>
<keyword id="KW-0965">Cell junction</keyword>
<keyword id="KW-1003">Cell membrane</keyword>
<keyword id="KW-0303">Gap junction</keyword>
<keyword id="KW-0472">Membrane</keyword>
<keyword id="KW-1185">Reference proteome</keyword>
<keyword id="KW-0812">Transmembrane</keyword>
<keyword id="KW-1133">Transmembrane helix</keyword>
<organism>
    <name type="scientific">Homo sapiens</name>
    <name type="common">Human</name>
    <dbReference type="NCBI Taxonomy" id="9606"/>
    <lineage>
        <taxon>Eukaryota</taxon>
        <taxon>Metazoa</taxon>
        <taxon>Chordata</taxon>
        <taxon>Craniata</taxon>
        <taxon>Vertebrata</taxon>
        <taxon>Euteleostomi</taxon>
        <taxon>Mammalia</taxon>
        <taxon>Eutheria</taxon>
        <taxon>Euarchontoglires</taxon>
        <taxon>Primates</taxon>
        <taxon>Haplorrhini</taxon>
        <taxon>Catarrhini</taxon>
        <taxon>Hominidae</taxon>
        <taxon>Homo</taxon>
    </lineage>
</organism>
<name>CXA9_HUMAN</name>
<evidence type="ECO:0000250" key="1"/>
<evidence type="ECO:0000255" key="2"/>
<evidence type="ECO:0000256" key="3">
    <source>
        <dbReference type="SAM" id="MobiDB-lite"/>
    </source>
</evidence>
<evidence type="ECO:0000269" key="4">
    <source>
    </source>
</evidence>
<evidence type="ECO:0000269" key="5">
    <source ref="1"/>
</evidence>
<evidence type="ECO:0000303" key="6">
    <source>
    </source>
</evidence>
<evidence type="ECO:0000305" key="7"/>
<accession>P57773</accession>
<accession>B2R722</accession>
<accession>B3KVQ2</accession>
<accession>Q5TA63</accession>
<accession>Q96KG0</accession>
<proteinExistence type="evidence at transcript level"/>